<dbReference type="EC" id="2.7.7.-" evidence="1"/>
<dbReference type="EC" id="2.7.7.108" evidence="1"/>
<dbReference type="EMBL" id="CP000380">
    <property type="protein sequence ID" value="ABF81035.1"/>
    <property type="molecule type" value="Genomic_DNA"/>
</dbReference>
<dbReference type="SMR" id="Q1BH70"/>
<dbReference type="HOGENOM" id="CLU_010245_4_0_4"/>
<dbReference type="GO" id="GO:0070733">
    <property type="term" value="F:AMPylase activity"/>
    <property type="evidence" value="ECO:0007669"/>
    <property type="project" value="RHEA"/>
</dbReference>
<dbReference type="GO" id="GO:0005524">
    <property type="term" value="F:ATP binding"/>
    <property type="evidence" value="ECO:0007669"/>
    <property type="project" value="UniProtKB-UniRule"/>
</dbReference>
<dbReference type="GO" id="GO:0000287">
    <property type="term" value="F:magnesium ion binding"/>
    <property type="evidence" value="ECO:0007669"/>
    <property type="project" value="UniProtKB-UniRule"/>
</dbReference>
<dbReference type="HAMAP" id="MF_00692">
    <property type="entry name" value="YdiU_SelO"/>
    <property type="match status" value="1"/>
</dbReference>
<dbReference type="InterPro" id="IPR003846">
    <property type="entry name" value="SelO"/>
</dbReference>
<dbReference type="NCBIfam" id="NF000658">
    <property type="entry name" value="PRK00029.1"/>
    <property type="match status" value="1"/>
</dbReference>
<dbReference type="PANTHER" id="PTHR32057">
    <property type="entry name" value="PROTEIN ADENYLYLTRANSFERASE SELO, MITOCHONDRIAL"/>
    <property type="match status" value="1"/>
</dbReference>
<dbReference type="PANTHER" id="PTHR32057:SF14">
    <property type="entry name" value="PROTEIN ADENYLYLTRANSFERASE SELO, MITOCHONDRIAL"/>
    <property type="match status" value="1"/>
</dbReference>
<dbReference type="Pfam" id="PF02696">
    <property type="entry name" value="SelO"/>
    <property type="match status" value="1"/>
</dbReference>
<organism>
    <name type="scientific">Burkholderia orbicola (strain AU 1054)</name>
    <dbReference type="NCBI Taxonomy" id="331271"/>
    <lineage>
        <taxon>Bacteria</taxon>
        <taxon>Pseudomonadati</taxon>
        <taxon>Pseudomonadota</taxon>
        <taxon>Betaproteobacteria</taxon>
        <taxon>Burkholderiales</taxon>
        <taxon>Burkholderiaceae</taxon>
        <taxon>Burkholderia</taxon>
        <taxon>Burkholderia cepacia complex</taxon>
        <taxon>Burkholderia orbicola</taxon>
    </lineage>
</organism>
<sequence length="522" mass="57617">MSFSRSAADAADTLPDLAATLGAPAERAFVTLGDAFHTRLPAAPLAAPYVVGFSDDVAQLLDLPPSIAAQPGFAELFAGNPTRDWPAHAMPYASVYSGHQFGVWAGQLGDGRALTIGELPGTDGRRYELQLKGGGRTPYSRMGDGRAVLRSSIREFLCSEAMHHLGIPTTRALTVIGSDQPVVREEIETAAVVTRVSESFVRFGHFEHFFSNDRPDLLRQLADHVIDRFYPACRDADDPYLALLEAATLRTADLVAQWQAVGFCHGVMNTDNMSILGVTIDYGPFGFVDAFDANHICNHSDTSGRYAYRMQPRIAHWNCYCLAQALLPLIGLQHGIADDDARAERAVDDAQAVLAKFPERFGPALERAMRAKLGLELEREGDAELANKLLETMHASHADFTLTFRRLAQISKHDASRDAPVRDLFIDREAFDAWANLYRARLSEETRDDAARAVAMNRANPKYVLRNHLAEVAIRRAKEKDFSEVERLAQILRRPFDEQPEHEAYAALPPDWAGSLEVSCSS</sequence>
<gene>
    <name evidence="1" type="primary">ydiU</name>
    <name evidence="1" type="synonym">selO</name>
    <name type="ordered locus">Bcen_6171</name>
</gene>
<proteinExistence type="inferred from homology"/>
<keyword id="KW-0067">ATP-binding</keyword>
<keyword id="KW-0460">Magnesium</keyword>
<keyword id="KW-0464">Manganese</keyword>
<keyword id="KW-0479">Metal-binding</keyword>
<keyword id="KW-0547">Nucleotide-binding</keyword>
<keyword id="KW-0548">Nucleotidyltransferase</keyword>
<keyword id="KW-0808">Transferase</keyword>
<feature type="chain" id="PRO_0000271811" description="Protein nucleotidyltransferase YdiU">
    <location>
        <begin position="1"/>
        <end position="522"/>
    </location>
</feature>
<feature type="active site" description="Proton acceptor" evidence="1">
    <location>
        <position position="271"/>
    </location>
</feature>
<feature type="binding site" evidence="1">
    <location>
        <position position="109"/>
    </location>
    <ligand>
        <name>ATP</name>
        <dbReference type="ChEBI" id="CHEBI:30616"/>
    </ligand>
</feature>
<feature type="binding site" evidence="1">
    <location>
        <position position="111"/>
    </location>
    <ligand>
        <name>ATP</name>
        <dbReference type="ChEBI" id="CHEBI:30616"/>
    </ligand>
</feature>
<feature type="binding site" evidence="1">
    <location>
        <position position="112"/>
    </location>
    <ligand>
        <name>ATP</name>
        <dbReference type="ChEBI" id="CHEBI:30616"/>
    </ligand>
</feature>
<feature type="binding site" evidence="1">
    <location>
        <position position="132"/>
    </location>
    <ligand>
        <name>ATP</name>
        <dbReference type="ChEBI" id="CHEBI:30616"/>
    </ligand>
</feature>
<feature type="binding site" evidence="1">
    <location>
        <position position="144"/>
    </location>
    <ligand>
        <name>ATP</name>
        <dbReference type="ChEBI" id="CHEBI:30616"/>
    </ligand>
</feature>
<feature type="binding site" evidence="1">
    <location>
        <position position="145"/>
    </location>
    <ligand>
        <name>ATP</name>
        <dbReference type="ChEBI" id="CHEBI:30616"/>
    </ligand>
</feature>
<feature type="binding site" evidence="1">
    <location>
        <position position="195"/>
    </location>
    <ligand>
        <name>ATP</name>
        <dbReference type="ChEBI" id="CHEBI:30616"/>
    </ligand>
</feature>
<feature type="binding site" evidence="1">
    <location>
        <position position="202"/>
    </location>
    <ligand>
        <name>ATP</name>
        <dbReference type="ChEBI" id="CHEBI:30616"/>
    </ligand>
</feature>
<feature type="binding site" evidence="1">
    <location>
        <position position="272"/>
    </location>
    <ligand>
        <name>Mg(2+)</name>
        <dbReference type="ChEBI" id="CHEBI:18420"/>
    </ligand>
</feature>
<feature type="binding site" evidence="1">
    <location>
        <position position="281"/>
    </location>
    <ligand>
        <name>ATP</name>
        <dbReference type="ChEBI" id="CHEBI:30616"/>
    </ligand>
</feature>
<feature type="binding site" evidence="1">
    <location>
        <position position="281"/>
    </location>
    <ligand>
        <name>Mg(2+)</name>
        <dbReference type="ChEBI" id="CHEBI:18420"/>
    </ligand>
</feature>
<name>SELO_BURO1</name>
<evidence type="ECO:0000255" key="1">
    <source>
        <dbReference type="HAMAP-Rule" id="MF_00692"/>
    </source>
</evidence>
<comment type="function">
    <text evidence="1">Nucleotidyltransferase involved in the post-translational modification of proteins. It can catalyze the addition of adenosine monophosphate (AMP) or uridine monophosphate (UMP) to a protein, resulting in modifications known as AMPylation and UMPylation.</text>
</comment>
<comment type="catalytic activity">
    <reaction evidence="1">
        <text>L-seryl-[protein] + ATP = 3-O-(5'-adenylyl)-L-seryl-[protein] + diphosphate</text>
        <dbReference type="Rhea" id="RHEA:58120"/>
        <dbReference type="Rhea" id="RHEA-COMP:9863"/>
        <dbReference type="Rhea" id="RHEA-COMP:15073"/>
        <dbReference type="ChEBI" id="CHEBI:29999"/>
        <dbReference type="ChEBI" id="CHEBI:30616"/>
        <dbReference type="ChEBI" id="CHEBI:33019"/>
        <dbReference type="ChEBI" id="CHEBI:142516"/>
        <dbReference type="EC" id="2.7.7.108"/>
    </reaction>
</comment>
<comment type="catalytic activity">
    <reaction evidence="1">
        <text>L-threonyl-[protein] + ATP = 3-O-(5'-adenylyl)-L-threonyl-[protein] + diphosphate</text>
        <dbReference type="Rhea" id="RHEA:54292"/>
        <dbReference type="Rhea" id="RHEA-COMP:11060"/>
        <dbReference type="Rhea" id="RHEA-COMP:13847"/>
        <dbReference type="ChEBI" id="CHEBI:30013"/>
        <dbReference type="ChEBI" id="CHEBI:30616"/>
        <dbReference type="ChEBI" id="CHEBI:33019"/>
        <dbReference type="ChEBI" id="CHEBI:138113"/>
        <dbReference type="EC" id="2.7.7.108"/>
    </reaction>
</comment>
<comment type="catalytic activity">
    <reaction evidence="1">
        <text>L-tyrosyl-[protein] + ATP = O-(5'-adenylyl)-L-tyrosyl-[protein] + diphosphate</text>
        <dbReference type="Rhea" id="RHEA:54288"/>
        <dbReference type="Rhea" id="RHEA-COMP:10136"/>
        <dbReference type="Rhea" id="RHEA-COMP:13846"/>
        <dbReference type="ChEBI" id="CHEBI:30616"/>
        <dbReference type="ChEBI" id="CHEBI:33019"/>
        <dbReference type="ChEBI" id="CHEBI:46858"/>
        <dbReference type="ChEBI" id="CHEBI:83624"/>
        <dbReference type="EC" id="2.7.7.108"/>
    </reaction>
</comment>
<comment type="catalytic activity">
    <reaction evidence="1">
        <text>L-histidyl-[protein] + UTP = N(tele)-(5'-uridylyl)-L-histidyl-[protein] + diphosphate</text>
        <dbReference type="Rhea" id="RHEA:83891"/>
        <dbReference type="Rhea" id="RHEA-COMP:9745"/>
        <dbReference type="Rhea" id="RHEA-COMP:20239"/>
        <dbReference type="ChEBI" id="CHEBI:29979"/>
        <dbReference type="ChEBI" id="CHEBI:33019"/>
        <dbReference type="ChEBI" id="CHEBI:46398"/>
        <dbReference type="ChEBI" id="CHEBI:233474"/>
    </reaction>
</comment>
<comment type="catalytic activity">
    <reaction evidence="1">
        <text>L-seryl-[protein] + UTP = O-(5'-uridylyl)-L-seryl-[protein] + diphosphate</text>
        <dbReference type="Rhea" id="RHEA:64604"/>
        <dbReference type="Rhea" id="RHEA-COMP:9863"/>
        <dbReference type="Rhea" id="RHEA-COMP:16635"/>
        <dbReference type="ChEBI" id="CHEBI:29999"/>
        <dbReference type="ChEBI" id="CHEBI:33019"/>
        <dbReference type="ChEBI" id="CHEBI:46398"/>
        <dbReference type="ChEBI" id="CHEBI:156051"/>
    </reaction>
</comment>
<comment type="catalytic activity">
    <reaction evidence="1">
        <text>L-tyrosyl-[protein] + UTP = O-(5'-uridylyl)-L-tyrosyl-[protein] + diphosphate</text>
        <dbReference type="Rhea" id="RHEA:83887"/>
        <dbReference type="Rhea" id="RHEA-COMP:10136"/>
        <dbReference type="Rhea" id="RHEA-COMP:20238"/>
        <dbReference type="ChEBI" id="CHEBI:33019"/>
        <dbReference type="ChEBI" id="CHEBI:46398"/>
        <dbReference type="ChEBI" id="CHEBI:46858"/>
        <dbReference type="ChEBI" id="CHEBI:90602"/>
    </reaction>
</comment>
<comment type="cofactor">
    <cofactor evidence="1">
        <name>Mg(2+)</name>
        <dbReference type="ChEBI" id="CHEBI:18420"/>
    </cofactor>
    <cofactor evidence="1">
        <name>Mn(2+)</name>
        <dbReference type="ChEBI" id="CHEBI:29035"/>
    </cofactor>
</comment>
<comment type="similarity">
    <text evidence="1">Belongs to the SELO family.</text>
</comment>
<accession>Q1BH70</accession>
<reference key="1">
    <citation type="submission" date="2006-05" db="EMBL/GenBank/DDBJ databases">
        <title>Complete sequence of chromosome 3 of Burkholderia cenocepacia AU 1054.</title>
        <authorList>
            <consortium name="US DOE Joint Genome Institute"/>
            <person name="Copeland A."/>
            <person name="Lucas S."/>
            <person name="Lapidus A."/>
            <person name="Barry K."/>
            <person name="Detter J.C."/>
            <person name="Glavina del Rio T."/>
            <person name="Hammon N."/>
            <person name="Israni S."/>
            <person name="Dalin E."/>
            <person name="Tice H."/>
            <person name="Pitluck S."/>
            <person name="Chain P."/>
            <person name="Malfatti S."/>
            <person name="Shin M."/>
            <person name="Vergez L."/>
            <person name="Schmutz J."/>
            <person name="Larimer F."/>
            <person name="Land M."/>
            <person name="Hauser L."/>
            <person name="Kyrpides N."/>
            <person name="Lykidis A."/>
            <person name="LiPuma J.J."/>
            <person name="Konstantinidis K."/>
            <person name="Tiedje J.M."/>
            <person name="Richardson P."/>
        </authorList>
    </citation>
    <scope>NUCLEOTIDE SEQUENCE [LARGE SCALE GENOMIC DNA]</scope>
    <source>
        <strain>AU 1054</strain>
    </source>
</reference>
<protein>
    <recommendedName>
        <fullName evidence="1">Protein nucleotidyltransferase YdiU</fullName>
        <ecNumber evidence="1">2.7.7.-</ecNumber>
    </recommendedName>
    <alternativeName>
        <fullName evidence="1">Protein adenylyltransferase YdiU</fullName>
        <ecNumber evidence="1">2.7.7.108</ecNumber>
    </alternativeName>
    <alternativeName>
        <fullName evidence="1">Protein uridylyltransferase YdiU</fullName>
        <ecNumber evidence="1">2.7.7.-</ecNumber>
    </alternativeName>
</protein>